<keyword id="KW-0414">Isoprene biosynthesis</keyword>
<keyword id="KW-0460">Magnesium</keyword>
<keyword id="KW-0479">Metal-binding</keyword>
<keyword id="KW-0784">Thiamine biosynthesis</keyword>
<keyword id="KW-0786">Thiamine pyrophosphate</keyword>
<keyword id="KW-0808">Transferase</keyword>
<dbReference type="EC" id="2.2.1.7" evidence="1"/>
<dbReference type="EMBL" id="AP006861">
    <property type="protein sequence ID" value="BAE81471.1"/>
    <property type="molecule type" value="Genomic_DNA"/>
</dbReference>
<dbReference type="RefSeq" id="WP_011458249.1">
    <property type="nucleotide sequence ID" value="NC_007899.1"/>
</dbReference>
<dbReference type="SMR" id="Q253R7"/>
<dbReference type="STRING" id="264202.CF0699"/>
<dbReference type="KEGG" id="cfe:CF0699"/>
<dbReference type="eggNOG" id="COG1154">
    <property type="taxonomic scope" value="Bacteria"/>
</dbReference>
<dbReference type="HOGENOM" id="CLU_009227_1_4_0"/>
<dbReference type="OrthoDB" id="9803371at2"/>
<dbReference type="UniPathway" id="UPA00064">
    <property type="reaction ID" value="UER00091"/>
</dbReference>
<dbReference type="Proteomes" id="UP000001260">
    <property type="component" value="Chromosome"/>
</dbReference>
<dbReference type="GO" id="GO:0005829">
    <property type="term" value="C:cytosol"/>
    <property type="evidence" value="ECO:0007669"/>
    <property type="project" value="TreeGrafter"/>
</dbReference>
<dbReference type="GO" id="GO:0008661">
    <property type="term" value="F:1-deoxy-D-xylulose-5-phosphate synthase activity"/>
    <property type="evidence" value="ECO:0007669"/>
    <property type="project" value="UniProtKB-UniRule"/>
</dbReference>
<dbReference type="GO" id="GO:0000287">
    <property type="term" value="F:magnesium ion binding"/>
    <property type="evidence" value="ECO:0007669"/>
    <property type="project" value="UniProtKB-UniRule"/>
</dbReference>
<dbReference type="GO" id="GO:0030976">
    <property type="term" value="F:thiamine pyrophosphate binding"/>
    <property type="evidence" value="ECO:0007669"/>
    <property type="project" value="UniProtKB-UniRule"/>
</dbReference>
<dbReference type="GO" id="GO:0052865">
    <property type="term" value="P:1-deoxy-D-xylulose 5-phosphate biosynthetic process"/>
    <property type="evidence" value="ECO:0007669"/>
    <property type="project" value="UniProtKB-UniPathway"/>
</dbReference>
<dbReference type="GO" id="GO:0019288">
    <property type="term" value="P:isopentenyl diphosphate biosynthetic process, methylerythritol 4-phosphate pathway"/>
    <property type="evidence" value="ECO:0007669"/>
    <property type="project" value="TreeGrafter"/>
</dbReference>
<dbReference type="GO" id="GO:0016114">
    <property type="term" value="P:terpenoid biosynthetic process"/>
    <property type="evidence" value="ECO:0007669"/>
    <property type="project" value="UniProtKB-UniRule"/>
</dbReference>
<dbReference type="GO" id="GO:0009228">
    <property type="term" value="P:thiamine biosynthetic process"/>
    <property type="evidence" value="ECO:0007669"/>
    <property type="project" value="UniProtKB-UniRule"/>
</dbReference>
<dbReference type="CDD" id="cd02007">
    <property type="entry name" value="TPP_DXS"/>
    <property type="match status" value="1"/>
</dbReference>
<dbReference type="CDD" id="cd07033">
    <property type="entry name" value="TPP_PYR_DXS_TK_like"/>
    <property type="match status" value="1"/>
</dbReference>
<dbReference type="Gene3D" id="3.40.50.920">
    <property type="match status" value="1"/>
</dbReference>
<dbReference type="Gene3D" id="3.40.50.970">
    <property type="match status" value="2"/>
</dbReference>
<dbReference type="HAMAP" id="MF_00315">
    <property type="entry name" value="DXP_synth"/>
    <property type="match status" value="1"/>
</dbReference>
<dbReference type="InterPro" id="IPR005477">
    <property type="entry name" value="Dxylulose-5-P_synthase"/>
</dbReference>
<dbReference type="InterPro" id="IPR029061">
    <property type="entry name" value="THDP-binding"/>
</dbReference>
<dbReference type="InterPro" id="IPR009014">
    <property type="entry name" value="Transketo_C/PFOR_II"/>
</dbReference>
<dbReference type="InterPro" id="IPR005475">
    <property type="entry name" value="Transketolase-like_Pyr-bd"/>
</dbReference>
<dbReference type="InterPro" id="IPR033248">
    <property type="entry name" value="Transketolase_C"/>
</dbReference>
<dbReference type="InterPro" id="IPR049557">
    <property type="entry name" value="Transketolase_CS"/>
</dbReference>
<dbReference type="NCBIfam" id="TIGR00204">
    <property type="entry name" value="dxs"/>
    <property type="match status" value="1"/>
</dbReference>
<dbReference type="NCBIfam" id="NF003933">
    <property type="entry name" value="PRK05444.2-2"/>
    <property type="match status" value="1"/>
</dbReference>
<dbReference type="PANTHER" id="PTHR43322">
    <property type="entry name" value="1-D-DEOXYXYLULOSE 5-PHOSPHATE SYNTHASE-RELATED"/>
    <property type="match status" value="1"/>
</dbReference>
<dbReference type="PANTHER" id="PTHR43322:SF5">
    <property type="entry name" value="1-DEOXY-D-XYLULOSE-5-PHOSPHATE SYNTHASE, CHLOROPLASTIC"/>
    <property type="match status" value="1"/>
</dbReference>
<dbReference type="Pfam" id="PF13292">
    <property type="entry name" value="DXP_synthase_N"/>
    <property type="match status" value="1"/>
</dbReference>
<dbReference type="Pfam" id="PF02779">
    <property type="entry name" value="Transket_pyr"/>
    <property type="match status" value="1"/>
</dbReference>
<dbReference type="Pfam" id="PF02780">
    <property type="entry name" value="Transketolase_C"/>
    <property type="match status" value="1"/>
</dbReference>
<dbReference type="SMART" id="SM00861">
    <property type="entry name" value="Transket_pyr"/>
    <property type="match status" value="1"/>
</dbReference>
<dbReference type="SUPFAM" id="SSF52518">
    <property type="entry name" value="Thiamin diphosphate-binding fold (THDP-binding)"/>
    <property type="match status" value="2"/>
</dbReference>
<dbReference type="SUPFAM" id="SSF52922">
    <property type="entry name" value="TK C-terminal domain-like"/>
    <property type="match status" value="1"/>
</dbReference>
<dbReference type="PROSITE" id="PS00801">
    <property type="entry name" value="TRANSKETOLASE_1"/>
    <property type="match status" value="1"/>
</dbReference>
<sequence length="644" mass="71096">MTSQVSSILSRISSPTDLKNLSLAELSLLAEQMRHKIISVLTNTGGHLASNLGIIEVTIALHYVFSSTEDKFIFDVGHQAYPHKLLTGRNTEEFDRIRHDGGLSGFTSPSESMHDLFFSGHAGNALSLALGMAKATEDSRTHILPILGDAAFSCGLTLEALNNISSNLSKFIVILNDNNMSISQNVGVMSKNLSRWIHHPKFSLFSRKIEKWLTKIPRYGNGISKRSHKLSTCLKSLFCPIPIFEQFNLAYMGPVDGHNIKRLISVFQTARDLPFPVLIHICTTKGKGLEIAQENPEKYHGVTANFNSSEKNKLLPTIKPQLTYPDVFGQTVCKLGETSPNLHIVTPAMSLGSRLEAFKEKFPKRFIDVGIAEGHAVTFSAGIAKAKSPVICSIYSTFLHRALDNVFHDVCLQGLPVILAIDRAGLAYGDGCSHHGIYDISFLRAMPNMIICQPRSAIVLQQLLQSSLQWNMPSAIRYPNIAAIQRDPIATDVNMHRDPGLGEILSQGEDILIIGLGHMCNTALSIKLQLLTHGISATVVDPVFIKPFDNNLFSILLMHHSKVIIIEEHSIRGGLASEFNDFLATYGFKVDVLHFGIPDAFFSHGDKESLLKRVGLDTESMVKRILTHFNFRTKTSPSNKLSIV</sequence>
<protein>
    <recommendedName>
        <fullName evidence="1">1-deoxy-D-xylulose-5-phosphate synthase</fullName>
        <ecNumber evidence="1">2.2.1.7</ecNumber>
    </recommendedName>
    <alternativeName>
        <fullName evidence="1">1-deoxyxylulose-5-phosphate synthase</fullName>
        <shortName evidence="1">DXP synthase</shortName>
        <shortName evidence="1">DXPS</shortName>
    </alternativeName>
</protein>
<feature type="chain" id="PRO_0000256397" description="1-deoxy-D-xylulose-5-phosphate synthase">
    <location>
        <begin position="1"/>
        <end position="644"/>
    </location>
</feature>
<feature type="binding site" evidence="1">
    <location>
        <position position="78"/>
    </location>
    <ligand>
        <name>thiamine diphosphate</name>
        <dbReference type="ChEBI" id="CHEBI:58937"/>
    </ligand>
</feature>
<feature type="binding site" evidence="1">
    <location>
        <begin position="120"/>
        <end position="122"/>
    </location>
    <ligand>
        <name>thiamine diphosphate</name>
        <dbReference type="ChEBI" id="CHEBI:58937"/>
    </ligand>
</feature>
<feature type="binding site" evidence="1">
    <location>
        <position position="149"/>
    </location>
    <ligand>
        <name>Mg(2+)</name>
        <dbReference type="ChEBI" id="CHEBI:18420"/>
    </ligand>
</feature>
<feature type="binding site" evidence="1">
    <location>
        <begin position="150"/>
        <end position="151"/>
    </location>
    <ligand>
        <name>thiamine diphosphate</name>
        <dbReference type="ChEBI" id="CHEBI:58937"/>
    </ligand>
</feature>
<feature type="binding site" evidence="1">
    <location>
        <position position="178"/>
    </location>
    <ligand>
        <name>Mg(2+)</name>
        <dbReference type="ChEBI" id="CHEBI:18420"/>
    </ligand>
</feature>
<feature type="binding site" evidence="1">
    <location>
        <position position="178"/>
    </location>
    <ligand>
        <name>thiamine diphosphate</name>
        <dbReference type="ChEBI" id="CHEBI:58937"/>
    </ligand>
</feature>
<feature type="binding site" evidence="1">
    <location>
        <position position="373"/>
    </location>
    <ligand>
        <name>thiamine diphosphate</name>
        <dbReference type="ChEBI" id="CHEBI:58937"/>
    </ligand>
</feature>
<comment type="function">
    <text evidence="1">Catalyzes the acyloin condensation reaction between C atoms 2 and 3 of pyruvate and glyceraldehyde 3-phosphate to yield 1-deoxy-D-xylulose-5-phosphate (DXP).</text>
</comment>
<comment type="catalytic activity">
    <reaction evidence="1">
        <text>D-glyceraldehyde 3-phosphate + pyruvate + H(+) = 1-deoxy-D-xylulose 5-phosphate + CO2</text>
        <dbReference type="Rhea" id="RHEA:12605"/>
        <dbReference type="ChEBI" id="CHEBI:15361"/>
        <dbReference type="ChEBI" id="CHEBI:15378"/>
        <dbReference type="ChEBI" id="CHEBI:16526"/>
        <dbReference type="ChEBI" id="CHEBI:57792"/>
        <dbReference type="ChEBI" id="CHEBI:59776"/>
        <dbReference type="EC" id="2.2.1.7"/>
    </reaction>
</comment>
<comment type="cofactor">
    <cofactor evidence="1">
        <name>Mg(2+)</name>
        <dbReference type="ChEBI" id="CHEBI:18420"/>
    </cofactor>
    <text evidence="1">Binds 1 Mg(2+) ion per subunit.</text>
</comment>
<comment type="cofactor">
    <cofactor evidence="1">
        <name>thiamine diphosphate</name>
        <dbReference type="ChEBI" id="CHEBI:58937"/>
    </cofactor>
    <text evidence="1">Binds 1 thiamine pyrophosphate per subunit.</text>
</comment>
<comment type="pathway">
    <text evidence="1">Metabolic intermediate biosynthesis; 1-deoxy-D-xylulose 5-phosphate biosynthesis; 1-deoxy-D-xylulose 5-phosphate from D-glyceraldehyde 3-phosphate and pyruvate: step 1/1.</text>
</comment>
<comment type="subunit">
    <text evidence="1">Homodimer.</text>
</comment>
<comment type="similarity">
    <text evidence="1">Belongs to the transketolase family. DXPS subfamily.</text>
</comment>
<proteinExistence type="inferred from homology"/>
<evidence type="ECO:0000255" key="1">
    <source>
        <dbReference type="HAMAP-Rule" id="MF_00315"/>
    </source>
</evidence>
<reference key="1">
    <citation type="journal article" date="2006" name="DNA Res.">
        <title>Genome sequence of the cat pathogen, Chlamydophila felis.</title>
        <authorList>
            <person name="Azuma Y."/>
            <person name="Hirakawa H."/>
            <person name="Yamashita A."/>
            <person name="Cai Y."/>
            <person name="Rahman M.A."/>
            <person name="Suzuki H."/>
            <person name="Mitaku S."/>
            <person name="Toh H."/>
            <person name="Goto S."/>
            <person name="Murakami T."/>
            <person name="Sugi K."/>
            <person name="Hayashi H."/>
            <person name="Fukushi H."/>
            <person name="Hattori M."/>
            <person name="Kuhara S."/>
            <person name="Shirai M."/>
        </authorList>
    </citation>
    <scope>NUCLEOTIDE SEQUENCE [LARGE SCALE GENOMIC DNA]</scope>
    <source>
        <strain>Fe/C-56</strain>
    </source>
</reference>
<organism>
    <name type="scientific">Chlamydia felis (strain Fe/C-56)</name>
    <name type="common">Chlamydophila felis</name>
    <dbReference type="NCBI Taxonomy" id="264202"/>
    <lineage>
        <taxon>Bacteria</taxon>
        <taxon>Pseudomonadati</taxon>
        <taxon>Chlamydiota</taxon>
        <taxon>Chlamydiia</taxon>
        <taxon>Chlamydiales</taxon>
        <taxon>Chlamydiaceae</taxon>
        <taxon>Chlamydia/Chlamydophila group</taxon>
        <taxon>Chlamydia</taxon>
    </lineage>
</organism>
<gene>
    <name evidence="1" type="primary">dxs</name>
    <name type="ordered locus">CF0699</name>
</gene>
<name>DXS_CHLFF</name>
<accession>Q253R7</accession>